<protein>
    <recommendedName>
        <fullName evidence="1">Putative agmatine deiminase</fullName>
        <ecNumber evidence="1">3.5.3.12</ecNumber>
    </recommendedName>
    <alternativeName>
        <fullName evidence="1">Agmatine iminohydrolase</fullName>
    </alternativeName>
</protein>
<name>AGUA_VIBPA</name>
<gene>
    <name evidence="1" type="primary">aguA</name>
    <name type="ordered locus">VP1773</name>
</gene>
<evidence type="ECO:0000255" key="1">
    <source>
        <dbReference type="HAMAP-Rule" id="MF_01841"/>
    </source>
</evidence>
<dbReference type="EC" id="3.5.3.12" evidence="1"/>
<dbReference type="EMBL" id="BA000031">
    <property type="protein sequence ID" value="BAC60036.1"/>
    <property type="molecule type" value="Genomic_DNA"/>
</dbReference>
<dbReference type="RefSeq" id="NP_798152.1">
    <property type="nucleotide sequence ID" value="NC_004603.1"/>
</dbReference>
<dbReference type="RefSeq" id="WP_005464515.1">
    <property type="nucleotide sequence ID" value="NC_004603.1"/>
</dbReference>
<dbReference type="SMR" id="Q87NU5"/>
<dbReference type="GeneID" id="1189280"/>
<dbReference type="KEGG" id="vpa:VP1773"/>
<dbReference type="PATRIC" id="fig|223926.6.peg.1691"/>
<dbReference type="eggNOG" id="COG2957">
    <property type="taxonomic scope" value="Bacteria"/>
</dbReference>
<dbReference type="HOGENOM" id="CLU_037682_1_0_6"/>
<dbReference type="Proteomes" id="UP000002493">
    <property type="component" value="Chromosome 1"/>
</dbReference>
<dbReference type="GO" id="GO:0047632">
    <property type="term" value="F:agmatine deiminase activity"/>
    <property type="evidence" value="ECO:0007669"/>
    <property type="project" value="UniProtKB-UniRule"/>
</dbReference>
<dbReference type="GO" id="GO:0004668">
    <property type="term" value="F:protein-arginine deiminase activity"/>
    <property type="evidence" value="ECO:0007669"/>
    <property type="project" value="InterPro"/>
</dbReference>
<dbReference type="GO" id="GO:0009446">
    <property type="term" value="P:putrescine biosynthetic process"/>
    <property type="evidence" value="ECO:0007669"/>
    <property type="project" value="InterPro"/>
</dbReference>
<dbReference type="Gene3D" id="3.75.10.10">
    <property type="entry name" value="L-arginine/glycine Amidinotransferase, Chain A"/>
    <property type="match status" value="1"/>
</dbReference>
<dbReference type="HAMAP" id="MF_01841">
    <property type="entry name" value="Agmatine_deimin"/>
    <property type="match status" value="1"/>
</dbReference>
<dbReference type="InterPro" id="IPR017754">
    <property type="entry name" value="Agmatine_deiminase"/>
</dbReference>
<dbReference type="InterPro" id="IPR007466">
    <property type="entry name" value="Peptidyl-Arg-deiminase_porph"/>
</dbReference>
<dbReference type="NCBIfam" id="TIGR03380">
    <property type="entry name" value="agmatine_aguA"/>
    <property type="match status" value="1"/>
</dbReference>
<dbReference type="NCBIfam" id="NF010070">
    <property type="entry name" value="PRK13551.1"/>
    <property type="match status" value="1"/>
</dbReference>
<dbReference type="PANTHER" id="PTHR31377">
    <property type="entry name" value="AGMATINE DEIMINASE-RELATED"/>
    <property type="match status" value="1"/>
</dbReference>
<dbReference type="PANTHER" id="PTHR31377:SF0">
    <property type="entry name" value="AGMATINE DEIMINASE-RELATED"/>
    <property type="match status" value="1"/>
</dbReference>
<dbReference type="Pfam" id="PF04371">
    <property type="entry name" value="PAD_porph"/>
    <property type="match status" value="1"/>
</dbReference>
<dbReference type="SUPFAM" id="SSF55909">
    <property type="entry name" value="Pentein"/>
    <property type="match status" value="1"/>
</dbReference>
<reference key="1">
    <citation type="journal article" date="2003" name="Lancet">
        <title>Genome sequence of Vibrio parahaemolyticus: a pathogenic mechanism distinct from that of V. cholerae.</title>
        <authorList>
            <person name="Makino K."/>
            <person name="Oshima K."/>
            <person name="Kurokawa K."/>
            <person name="Yokoyama K."/>
            <person name="Uda T."/>
            <person name="Tagomori K."/>
            <person name="Iijima Y."/>
            <person name="Najima M."/>
            <person name="Nakano M."/>
            <person name="Yamashita A."/>
            <person name="Kubota Y."/>
            <person name="Kimura S."/>
            <person name="Yasunaga T."/>
            <person name="Honda T."/>
            <person name="Shinagawa H."/>
            <person name="Hattori M."/>
            <person name="Iida T."/>
        </authorList>
    </citation>
    <scope>NUCLEOTIDE SEQUENCE [LARGE SCALE GENOMIC DNA]</scope>
    <source>
        <strain>RIMD 2210633</strain>
    </source>
</reference>
<comment type="catalytic activity">
    <reaction evidence="1">
        <text>agmatine + H2O = N-carbamoylputrescine + NH4(+)</text>
        <dbReference type="Rhea" id="RHEA:18037"/>
        <dbReference type="ChEBI" id="CHEBI:15377"/>
        <dbReference type="ChEBI" id="CHEBI:28938"/>
        <dbReference type="ChEBI" id="CHEBI:58145"/>
        <dbReference type="ChEBI" id="CHEBI:58318"/>
        <dbReference type="EC" id="3.5.3.12"/>
    </reaction>
</comment>
<comment type="similarity">
    <text evidence="1">Belongs to the agmatine deiminase family.</text>
</comment>
<accession>Q87NU5</accession>
<keyword id="KW-0378">Hydrolase</keyword>
<proteinExistence type="inferred from homology"/>
<feature type="chain" id="PRO_0000194347" description="Putative agmatine deiminase">
    <location>
        <begin position="1"/>
        <end position="360"/>
    </location>
</feature>
<feature type="active site" description="Amidino-cysteine intermediate" evidence="1">
    <location>
        <position position="353"/>
    </location>
</feature>
<sequence length="360" mass="40172">MKLSTTPAQDGFYFPAEFQPVSEVWLAWPERKDNWRDDALPAQETFARIANLIAEVTKVCVAVCSHNFDRARQMLHSDVRLVEIPFNDAWMRDIGPTVLVNQAGERRGISWQFNAWGGEYNGLYDNWQQDDLVAGSVCDIIGIDYYRAPFVLEGGAIHTDGEGTLYTTEECLLSPGRNPQLSKAQIEEQLKVYLGIEKIIWLPNGLFNDETDGHVDNLMHVIAPGKVVLSWTDDPSDPQYALSRQAEQVLKSQHDAKGREIEIVRLPLPGPLHYSEREANGIDASSGMSRQAGERLSASYANFLIVNGHVFLPMLDEDTDAIAIDILQNAMPEYQIIAIPSREVLLGGGNIHCITQQIPA</sequence>
<organism>
    <name type="scientific">Vibrio parahaemolyticus serotype O3:K6 (strain RIMD 2210633)</name>
    <dbReference type="NCBI Taxonomy" id="223926"/>
    <lineage>
        <taxon>Bacteria</taxon>
        <taxon>Pseudomonadati</taxon>
        <taxon>Pseudomonadota</taxon>
        <taxon>Gammaproteobacteria</taxon>
        <taxon>Vibrionales</taxon>
        <taxon>Vibrionaceae</taxon>
        <taxon>Vibrio</taxon>
    </lineage>
</organism>